<organism>
    <name type="scientific">Neurospora crassa (strain ATCC 24698 / 74-OR23-1A / CBS 708.71 / DSM 1257 / FGSC 987)</name>
    <dbReference type="NCBI Taxonomy" id="367110"/>
    <lineage>
        <taxon>Eukaryota</taxon>
        <taxon>Fungi</taxon>
        <taxon>Dikarya</taxon>
        <taxon>Ascomycota</taxon>
        <taxon>Pezizomycotina</taxon>
        <taxon>Sordariomycetes</taxon>
        <taxon>Sordariomycetidae</taxon>
        <taxon>Sordariales</taxon>
        <taxon>Sordariaceae</taxon>
        <taxon>Neurospora</taxon>
    </lineage>
</organism>
<proteinExistence type="inferred from homology"/>
<protein>
    <recommendedName>
        <fullName>Mitochondrial protein cyt-4</fullName>
    </recommendedName>
</protein>
<comment type="function">
    <text>Required for RNA 5'- and 3'-end processing and splicing. May act on the RNA processing enzymes directly, or it may act on other regulatory molecules, which influence the activity or synthesis of these enzymes.</text>
</comment>
<comment type="subunit">
    <text evidence="3">Homodimer.</text>
</comment>
<comment type="subcellular location">
    <subcellularLocation>
        <location>Mitochondrion</location>
    </subcellularLocation>
</comment>
<comment type="similarity">
    <text evidence="3">Belongs to the RNR ribonuclease family.</text>
</comment>
<reference key="1">
    <citation type="journal article" date="1992" name="Proc. Natl. Acad. Sci. U.S.A.">
        <title>A protein required for RNA processing and splicing in Neurospora mitochondria is related to gene products involved in cell cycle protein phosphatase functions.</title>
        <authorList>
            <person name="Turcq B."/>
            <person name="Dobinson K.F."/>
            <person name="Serizawa N."/>
            <person name="Lambowitz A.M."/>
        </authorList>
    </citation>
    <scope>NUCLEOTIDE SEQUENCE [GENOMIC DNA]</scope>
    <source>
        <strain>ATCC 24698 / 74-OR23-1A / CBS 708.71 / DSM 1257 / FGSC 987</strain>
    </source>
</reference>
<reference key="2">
    <citation type="journal article" date="2003" name="Nature">
        <title>The genome sequence of the filamentous fungus Neurospora crassa.</title>
        <authorList>
            <person name="Galagan J.E."/>
            <person name="Calvo S.E."/>
            <person name="Borkovich K.A."/>
            <person name="Selker E.U."/>
            <person name="Read N.D."/>
            <person name="Jaffe D.B."/>
            <person name="FitzHugh W."/>
            <person name="Ma L.-J."/>
            <person name="Smirnov S."/>
            <person name="Purcell S."/>
            <person name="Rehman B."/>
            <person name="Elkins T."/>
            <person name="Engels R."/>
            <person name="Wang S."/>
            <person name="Nielsen C.B."/>
            <person name="Butler J."/>
            <person name="Endrizzi M."/>
            <person name="Qui D."/>
            <person name="Ianakiev P."/>
            <person name="Bell-Pedersen D."/>
            <person name="Nelson M.A."/>
            <person name="Werner-Washburne M."/>
            <person name="Selitrennikoff C.P."/>
            <person name="Kinsey J.A."/>
            <person name="Braun E.L."/>
            <person name="Zelter A."/>
            <person name="Schulte U."/>
            <person name="Kothe G.O."/>
            <person name="Jedd G."/>
            <person name="Mewes H.-W."/>
            <person name="Staben C."/>
            <person name="Marcotte E."/>
            <person name="Greenberg D."/>
            <person name="Roy A."/>
            <person name="Foley K."/>
            <person name="Naylor J."/>
            <person name="Stange-Thomann N."/>
            <person name="Barrett R."/>
            <person name="Gnerre S."/>
            <person name="Kamal M."/>
            <person name="Kamvysselis M."/>
            <person name="Mauceli E.W."/>
            <person name="Bielke C."/>
            <person name="Rudd S."/>
            <person name="Frishman D."/>
            <person name="Krystofova S."/>
            <person name="Rasmussen C."/>
            <person name="Metzenberg R.L."/>
            <person name="Perkins D.D."/>
            <person name="Kroken S."/>
            <person name="Cogoni C."/>
            <person name="Macino G."/>
            <person name="Catcheside D.E.A."/>
            <person name="Li W."/>
            <person name="Pratt R.J."/>
            <person name="Osmani S.A."/>
            <person name="DeSouza C.P.C."/>
            <person name="Glass N.L."/>
            <person name="Orbach M.J."/>
            <person name="Berglund J.A."/>
            <person name="Voelker R."/>
            <person name="Yarden O."/>
            <person name="Plamann M."/>
            <person name="Seiler S."/>
            <person name="Dunlap J.C."/>
            <person name="Radford A."/>
            <person name="Aramayo R."/>
            <person name="Natvig D.O."/>
            <person name="Alex L.A."/>
            <person name="Mannhaupt G."/>
            <person name="Ebbole D.J."/>
            <person name="Freitag M."/>
            <person name="Paulsen I."/>
            <person name="Sachs M.S."/>
            <person name="Lander E.S."/>
            <person name="Nusbaum C."/>
            <person name="Birren B.W."/>
        </authorList>
    </citation>
    <scope>NUCLEOTIDE SEQUENCE [LARGE SCALE GENOMIC DNA]</scope>
    <source>
        <strain>ATCC 24698 / 74-OR23-1A / CBS 708.71 / DSM 1257 / FGSC 987</strain>
    </source>
</reference>
<evidence type="ECO:0000255" key="1"/>
<evidence type="ECO:0000256" key="2">
    <source>
        <dbReference type="SAM" id="MobiDB-lite"/>
    </source>
</evidence>
<evidence type="ECO:0000305" key="3"/>
<sequence>MMRPSSRQPYVCWQCLSRKDSGQHIALNTRKARVASLSSLASWPISSASIAPRPTRQWDRTLRLFRERRQGLSTSTSLLGRKIPEISNEALEDFALPLEPDLQHLQDSQPKTTKRSAHLSIRQRLKQWEAENPEPFHSIPSDFALPDRPINAFTSKRSEHMLEIENIDNDNATAQVHDQDLIDTQVTPRVQAGDLVELKSEDWNIGVLAVCLGSFNGIDHFYAVTGKWFASSNFKSGFIVKNFITNSADLQPVIGALPSTVGDMSILVELQKLRAGPTREHGAGLITKMLDFQNTSRQIYQSNLERLSNPHRHLPEEEQLMTLGEIAEFLLPPKLKQSSTGFPPAALYAVYNNIRTFFDDFFHPLGQGTAGPSSIIFHVAARSDIENVARVERMVRDHYSPELLDRKSRREHDRLEPVLRQARLAIDHSRKMREWSSHGMLGPTTRVLPASTYSWSQDALTVIGVIHMWAASDVFPRSSKYQWIGAAVLRALGRYQDADVLDATVGWTFLQEIGWLMPWEIHARHSLRLPGLQVNRAGGLLPSPEEQQPAELDEDVLAPLRQDFYTSTVYCIDAPNAKEIDDGVSLEKTDKEGEYWIHVHIADPTSRIRPDSSLAKRAALMTQTSYLPGHVDKMISDEAVVAEFSLAPGRPSLTFSARLNEEGTLLDHKVTPGRIGDVVYITPQDVATAVGPVDAGIPKVSTPDVVLEVGTPPSAEDEAPTRKMTKPDELSEQNVKDLEILSRLAAAIHKVRIQKGSVPIFLPSPSADFSLVNARIEHTPSGFLACTNDPYISVKYSVSGGLHPIVDDLMGTANQIAALWCYERGIPIPFRTNLLAAQNEEALRAYTQDVIYPQLIAGKQPSLEEMRTLRNLLGGHDIAATPTFIYTMGVDIYTKATSPLRRYSDLLVHWQIQAALLEEHKRLAQGSQSLVIRKFDKYHLKPPMDDKQAARLGLPFTASHLENKVFPHLRVRERHAKTLANIDGRNELILQALVRAWRFGEGKEGQVPEKFTYTVVNVQNTCVRGRIDYFDLWAEIDLDNLAGFSLLSNMRAGDVLTVQLADVNVHMRKIVVKPVEFVQRGPERGRLFAEEQEGEGEVENGGEYIDVEHEVLQPQGR</sequence>
<dbReference type="EMBL" id="M80735">
    <property type="protein sequence ID" value="AAA33608.1"/>
    <property type="molecule type" value="Genomic_DNA"/>
</dbReference>
<dbReference type="EMBL" id="CM002236">
    <property type="protein sequence ID" value="EAA34685.3"/>
    <property type="molecule type" value="Genomic_DNA"/>
</dbReference>
<dbReference type="PIR" id="A38227">
    <property type="entry name" value="A38227"/>
</dbReference>
<dbReference type="RefSeq" id="XP_963921.3">
    <property type="nucleotide sequence ID" value="XM_958828.3"/>
</dbReference>
<dbReference type="SMR" id="P47950"/>
<dbReference type="STRING" id="367110.P47950"/>
<dbReference type="PaxDb" id="5141-EFNCRP00000009141"/>
<dbReference type="EnsemblFungi" id="EAA34685">
    <property type="protein sequence ID" value="EAA34685"/>
    <property type="gene ID" value="NCU09327"/>
</dbReference>
<dbReference type="GeneID" id="3880070"/>
<dbReference type="KEGG" id="ncr:NCU09327"/>
<dbReference type="VEuPathDB" id="FungiDB:NCU09327"/>
<dbReference type="HOGENOM" id="CLU_002512_0_1_1"/>
<dbReference type="InParanoid" id="P47950"/>
<dbReference type="OrthoDB" id="2285229at2759"/>
<dbReference type="Proteomes" id="UP000001805">
    <property type="component" value="Chromosome 1, Linkage Group I"/>
</dbReference>
<dbReference type="GO" id="GO:0005739">
    <property type="term" value="C:mitochondrion"/>
    <property type="evidence" value="ECO:0007669"/>
    <property type="project" value="UniProtKB-SubCell"/>
</dbReference>
<dbReference type="GO" id="GO:0000932">
    <property type="term" value="C:P-body"/>
    <property type="evidence" value="ECO:0000318"/>
    <property type="project" value="GO_Central"/>
</dbReference>
<dbReference type="GO" id="GO:0000175">
    <property type="term" value="F:3'-5'-RNA exonuclease activity"/>
    <property type="evidence" value="ECO:0000318"/>
    <property type="project" value="GO_Central"/>
</dbReference>
<dbReference type="GO" id="GO:0003723">
    <property type="term" value="F:RNA binding"/>
    <property type="evidence" value="ECO:0007669"/>
    <property type="project" value="InterPro"/>
</dbReference>
<dbReference type="GO" id="GO:0006402">
    <property type="term" value="P:mRNA catabolic process"/>
    <property type="evidence" value="ECO:0000318"/>
    <property type="project" value="GO_Central"/>
</dbReference>
<dbReference type="GO" id="GO:0006397">
    <property type="term" value="P:mRNA processing"/>
    <property type="evidence" value="ECO:0007669"/>
    <property type="project" value="UniProtKB-KW"/>
</dbReference>
<dbReference type="InterPro" id="IPR012340">
    <property type="entry name" value="NA-bd_OB-fold"/>
</dbReference>
<dbReference type="InterPro" id="IPR001900">
    <property type="entry name" value="RNase_II/R"/>
</dbReference>
<dbReference type="InterPro" id="IPR022966">
    <property type="entry name" value="RNase_II/R_CS"/>
</dbReference>
<dbReference type="InterPro" id="IPR050180">
    <property type="entry name" value="RNR_Ribonuclease"/>
</dbReference>
<dbReference type="InterPro" id="IPR056625">
    <property type="entry name" value="SH3_CYT4"/>
</dbReference>
<dbReference type="InterPro" id="IPR056624">
    <property type="entry name" value="WH_CYT4"/>
</dbReference>
<dbReference type="PANTHER" id="PTHR23355:SF65">
    <property type="entry name" value="EXORIBONUCLEASE CYT-4, PUTATIVE (AFU_ORTHOLOGUE AFUA_7G01550)-RELATED"/>
    <property type="match status" value="1"/>
</dbReference>
<dbReference type="PANTHER" id="PTHR23355">
    <property type="entry name" value="RIBONUCLEASE"/>
    <property type="match status" value="1"/>
</dbReference>
<dbReference type="Pfam" id="PF00773">
    <property type="entry name" value="RNB"/>
    <property type="match status" value="1"/>
</dbReference>
<dbReference type="Pfam" id="PF23214">
    <property type="entry name" value="SH3_CYT4"/>
    <property type="match status" value="1"/>
</dbReference>
<dbReference type="Pfam" id="PF23216">
    <property type="entry name" value="WH_CYT4"/>
    <property type="match status" value="1"/>
</dbReference>
<dbReference type="SMART" id="SM00955">
    <property type="entry name" value="RNB"/>
    <property type="match status" value="1"/>
</dbReference>
<dbReference type="SUPFAM" id="SSF50249">
    <property type="entry name" value="Nucleic acid-binding proteins"/>
    <property type="match status" value="1"/>
</dbReference>
<dbReference type="PROSITE" id="PS01175">
    <property type="entry name" value="RIBONUCLEASE_II"/>
    <property type="match status" value="1"/>
</dbReference>
<keyword id="KW-0496">Mitochondrion</keyword>
<keyword id="KW-0507">mRNA processing</keyword>
<keyword id="KW-1185">Reference proteome</keyword>
<gene>
    <name type="primary">cyt-4</name>
    <name type="ORF">NCU09327</name>
</gene>
<accession>P47950</accession>
<accession>Q7RVJ7</accession>
<name>CYT4_NEUCR</name>
<feature type="chain" id="PRO_0000166418" description="Mitochondrial protein cyt-4">
    <location>
        <begin position="1"/>
        <end position="1117"/>
    </location>
</feature>
<feature type="domain" description="RNB" evidence="1">
    <location>
        <begin position="561"/>
        <end position="916"/>
    </location>
</feature>
<feature type="region of interest" description="Disordered" evidence="2">
    <location>
        <begin position="705"/>
        <end position="730"/>
    </location>
</feature>
<feature type="compositionally biased region" description="Basic and acidic residues" evidence="2">
    <location>
        <begin position="719"/>
        <end position="730"/>
    </location>
</feature>